<keyword id="KW-0025">Alternative splicing</keyword>
<keyword id="KW-0225">Disease variant</keyword>
<keyword id="KW-0238">DNA-binding</keyword>
<keyword id="KW-0887">Epilepsy</keyword>
<keyword id="KW-0479">Metal-binding</keyword>
<keyword id="KW-0489">Methyltransferase</keyword>
<keyword id="KW-0523">Neurodegeneration</keyword>
<keyword id="KW-0524">Neurogenesis</keyword>
<keyword id="KW-0539">Nucleus</keyword>
<keyword id="KW-1267">Proteomics identification</keyword>
<keyword id="KW-1185">Reference proteome</keyword>
<keyword id="KW-0677">Repeat</keyword>
<keyword id="KW-0949">S-adenosyl-L-methionine</keyword>
<keyword id="KW-0804">Transcription</keyword>
<keyword id="KW-0805">Transcription regulation</keyword>
<keyword id="KW-0808">Transferase</keyword>
<keyword id="KW-0862">Zinc</keyword>
<keyword id="KW-0863">Zinc-finger</keyword>
<organism>
    <name type="scientific">Homo sapiens</name>
    <name type="common">Human</name>
    <dbReference type="NCBI Taxonomy" id="9606"/>
    <lineage>
        <taxon>Eukaryota</taxon>
        <taxon>Metazoa</taxon>
        <taxon>Chordata</taxon>
        <taxon>Craniata</taxon>
        <taxon>Vertebrata</taxon>
        <taxon>Euteleostomi</taxon>
        <taxon>Mammalia</taxon>
        <taxon>Eutheria</taxon>
        <taxon>Euarchontoglires</taxon>
        <taxon>Primates</taxon>
        <taxon>Haplorrhini</taxon>
        <taxon>Catarrhini</taxon>
        <taxon>Hominidae</taxon>
        <taxon>Homo</taxon>
    </lineage>
</organism>
<sequence>MEDTGIQRGIWDGDAKAVQQCLTDIFTSVYTTCDIPENAIFGPCVLSHTSLYDSIAFIALKSTDKRTVPYIFRVDTSAANGSSEGLMWLRLVQSARDKEEQNLEAYIKNGQLFYRSLRRIAKDEELLVWYGKELTELLLLCPSRSHNKMNGSSPYTCLECSQRFQFEFPYVAHLRFRCPKRLHSADISPQDEQGGGVGTKDHGGGGGGGKDQQQQQQEAPLGPGPKFCKAGPLHHYPSPSPESSNPSAAAGGSSAKPSTDFHNLARELENSRGGSSCSPAQSLSSGSGSGGGGGHQEAELSPDGIATGGGKGKRKFPEEAAEGGGGAGLVGGRGRFVERPLPASKEDLVCTPQQYRASGSYFGLEENGRLFAPPSPETGEAKRSAFVEVKKAARAASLQEEGTADGAGVASEDQDAGGGGGSSTPAAASPVGAEKLLAPRPGGPLPSRLEGGSPARGSAFTSVPQLGSAGSTSGGGGTGAGAAGGAGGGQGAASDERKSAFSQPARSFSQLSPLVLGQKLGALEPCHPADGVGPTRLYPAAADPLAVKLQGAADLNGGCGSLPSGGGGLPKQSPFLYATAFWPKSSAAAAAAAAAAAAGPLQLQLPSALTLLPPSFTSLCLPAQNWCAKCNASFRMTSDLVYHMRSHHKKEYAMEPLVKRRREEKLKCPICNESFRERHHLSRHMTSHN</sequence>
<accession>Q9NQV8</accession>
<accession>A8K7X2</accession>
<accession>Q6IQ36</accession>
<gene>
    <name type="primary">PRDM8</name>
    <name type="synonym">PFM5</name>
</gene>
<proteinExistence type="evidence at protein level"/>
<dbReference type="EC" id="2.1.1.-"/>
<dbReference type="EMBL" id="AF275815">
    <property type="protein sequence ID" value="AAF87241.1"/>
    <property type="status" value="ALT_FRAME"/>
    <property type="molecule type" value="mRNA"/>
</dbReference>
<dbReference type="EMBL" id="AK292137">
    <property type="protein sequence ID" value="BAF84826.1"/>
    <property type="molecule type" value="mRNA"/>
</dbReference>
<dbReference type="EMBL" id="CH471057">
    <property type="protein sequence ID" value="EAX05851.1"/>
    <property type="molecule type" value="Genomic_DNA"/>
</dbReference>
<dbReference type="EMBL" id="BC071584">
    <property type="protein sequence ID" value="AAH71584.1"/>
    <property type="molecule type" value="mRNA"/>
</dbReference>
<dbReference type="CCDS" id="CCDS43243.1">
    <molecule id="Q9NQV8-1"/>
</dbReference>
<dbReference type="RefSeq" id="NP_001092873.1">
    <molecule id="Q9NQV8-1"/>
    <property type="nucleotide sequence ID" value="NM_001099403.2"/>
</dbReference>
<dbReference type="RefSeq" id="NP_064611.3">
    <molecule id="Q9NQV8-1"/>
    <property type="nucleotide sequence ID" value="NM_020226.3"/>
</dbReference>
<dbReference type="RefSeq" id="XP_005263203.1">
    <property type="nucleotide sequence ID" value="XM_005263146.4"/>
</dbReference>
<dbReference type="SMR" id="Q9NQV8"/>
<dbReference type="BioGRID" id="121296">
    <property type="interactions" value="4"/>
</dbReference>
<dbReference type="FunCoup" id="Q9NQV8">
    <property type="interactions" value="2401"/>
</dbReference>
<dbReference type="STRING" id="9606.ENSP00000339764"/>
<dbReference type="ChEMBL" id="CHEMBL5214864"/>
<dbReference type="iPTMnet" id="Q9NQV8"/>
<dbReference type="PhosphoSitePlus" id="Q9NQV8"/>
<dbReference type="BioMuta" id="PRDM8"/>
<dbReference type="DMDM" id="212276495"/>
<dbReference type="jPOST" id="Q9NQV8"/>
<dbReference type="MassIVE" id="Q9NQV8"/>
<dbReference type="PaxDb" id="9606-ENSP00000339764"/>
<dbReference type="PeptideAtlas" id="Q9NQV8"/>
<dbReference type="ProteomicsDB" id="82199">
    <molecule id="Q9NQV8-1"/>
</dbReference>
<dbReference type="ProteomicsDB" id="82200">
    <molecule id="Q9NQV8-2"/>
</dbReference>
<dbReference type="Antibodypedia" id="24988">
    <property type="antibodies" value="110 antibodies from 18 providers"/>
</dbReference>
<dbReference type="DNASU" id="56978"/>
<dbReference type="Ensembl" id="ENST00000339711.8">
    <molecule id="Q9NQV8-1"/>
    <property type="protein sequence ID" value="ENSP00000339764.4"/>
    <property type="gene ID" value="ENSG00000152784.16"/>
</dbReference>
<dbReference type="Ensembl" id="ENST00000415738.3">
    <molecule id="Q9NQV8-1"/>
    <property type="protein sequence ID" value="ENSP00000406998.2"/>
    <property type="gene ID" value="ENSG00000152784.16"/>
</dbReference>
<dbReference type="Ensembl" id="ENST00000504452.5">
    <molecule id="Q9NQV8-1"/>
    <property type="protein sequence ID" value="ENSP00000423985.1"/>
    <property type="gene ID" value="ENSG00000152784.16"/>
</dbReference>
<dbReference type="GeneID" id="56978"/>
<dbReference type="KEGG" id="hsa:56978"/>
<dbReference type="MANE-Select" id="ENST00000415738.3">
    <property type="protein sequence ID" value="ENSP00000406998.2"/>
    <property type="RefSeq nucleotide sequence ID" value="NM_001099403.2"/>
    <property type="RefSeq protein sequence ID" value="NP_001092873.1"/>
</dbReference>
<dbReference type="UCSC" id="uc003hmb.5">
    <molecule id="Q9NQV8-1"/>
    <property type="organism name" value="human"/>
</dbReference>
<dbReference type="AGR" id="HGNC:13993"/>
<dbReference type="CTD" id="56978"/>
<dbReference type="DisGeNET" id="56978"/>
<dbReference type="GeneCards" id="PRDM8"/>
<dbReference type="HGNC" id="HGNC:13993">
    <property type="gene designation" value="PRDM8"/>
</dbReference>
<dbReference type="HPA" id="ENSG00000152784">
    <property type="expression patterns" value="Tissue enhanced (prostate, seminal vesicle)"/>
</dbReference>
<dbReference type="MalaCards" id="PRDM8"/>
<dbReference type="MIM" id="616639">
    <property type="type" value="gene"/>
</dbReference>
<dbReference type="MIM" id="616640">
    <property type="type" value="phenotype"/>
</dbReference>
<dbReference type="neXtProt" id="NX_Q9NQV8"/>
<dbReference type="OpenTargets" id="ENSG00000152784"/>
<dbReference type="Orphanet" id="324290">
    <property type="disease" value="Early-onset Lafora body disease"/>
</dbReference>
<dbReference type="PharmGKB" id="PA33720"/>
<dbReference type="VEuPathDB" id="HostDB:ENSG00000152784"/>
<dbReference type="eggNOG" id="KOG1721">
    <property type="taxonomic scope" value="Eukaryota"/>
</dbReference>
<dbReference type="eggNOG" id="KOG2461">
    <property type="taxonomic scope" value="Eukaryota"/>
</dbReference>
<dbReference type="GeneTree" id="ENSGT00890000139463"/>
<dbReference type="HOGENOM" id="CLU_034617_1_0_1"/>
<dbReference type="InParanoid" id="Q9NQV8"/>
<dbReference type="OMA" id="VYTTAFW"/>
<dbReference type="OrthoDB" id="5814089at2759"/>
<dbReference type="PAN-GO" id="Q9NQV8">
    <property type="GO annotations" value="3 GO annotations based on evolutionary models"/>
</dbReference>
<dbReference type="PhylomeDB" id="Q9NQV8"/>
<dbReference type="TreeFam" id="TF327090"/>
<dbReference type="PathwayCommons" id="Q9NQV8"/>
<dbReference type="Reactome" id="R-HSA-9762293">
    <property type="pathway name" value="Regulation of CDH11 gene transcription"/>
</dbReference>
<dbReference type="SignaLink" id="Q9NQV8"/>
<dbReference type="BioGRID-ORCS" id="56978">
    <property type="hits" value="9 hits in 1192 CRISPR screens"/>
</dbReference>
<dbReference type="ChiTaRS" id="PRDM8">
    <property type="organism name" value="human"/>
</dbReference>
<dbReference type="GenomeRNAi" id="56978"/>
<dbReference type="Pharos" id="Q9NQV8">
    <property type="development level" value="Tbio"/>
</dbReference>
<dbReference type="PRO" id="PR:Q9NQV8"/>
<dbReference type="Proteomes" id="UP000005640">
    <property type="component" value="Chromosome 4"/>
</dbReference>
<dbReference type="RNAct" id="Q9NQV8">
    <property type="molecule type" value="protein"/>
</dbReference>
<dbReference type="Bgee" id="ENSG00000152784">
    <property type="expression patterns" value="Expressed in cortical plate and 95 other cell types or tissues"/>
</dbReference>
<dbReference type="ExpressionAtlas" id="Q9NQV8">
    <property type="expression patterns" value="baseline and differential"/>
</dbReference>
<dbReference type="GO" id="GO:0016604">
    <property type="term" value="C:nuclear body"/>
    <property type="evidence" value="ECO:0000314"/>
    <property type="project" value="HPA"/>
</dbReference>
<dbReference type="GO" id="GO:0005654">
    <property type="term" value="C:nucleoplasm"/>
    <property type="evidence" value="ECO:0000314"/>
    <property type="project" value="HPA"/>
</dbReference>
<dbReference type="GO" id="GO:0005634">
    <property type="term" value="C:nucleus"/>
    <property type="evidence" value="ECO:0000314"/>
    <property type="project" value="UniProtKB"/>
</dbReference>
<dbReference type="GO" id="GO:0003682">
    <property type="term" value="F:chromatin binding"/>
    <property type="evidence" value="ECO:0007669"/>
    <property type="project" value="Ensembl"/>
</dbReference>
<dbReference type="GO" id="GO:0003677">
    <property type="term" value="F:DNA binding"/>
    <property type="evidence" value="ECO:0007669"/>
    <property type="project" value="UniProtKB-KW"/>
</dbReference>
<dbReference type="GO" id="GO:0046974">
    <property type="term" value="F:histone H3K9 methyltransferase activity"/>
    <property type="evidence" value="ECO:0007669"/>
    <property type="project" value="Ensembl"/>
</dbReference>
<dbReference type="GO" id="GO:0003714">
    <property type="term" value="F:transcription corepressor activity"/>
    <property type="evidence" value="ECO:0007669"/>
    <property type="project" value="Ensembl"/>
</dbReference>
<dbReference type="GO" id="GO:0008270">
    <property type="term" value="F:zinc ion binding"/>
    <property type="evidence" value="ECO:0007669"/>
    <property type="project" value="UniProtKB-KW"/>
</dbReference>
<dbReference type="GO" id="GO:0021540">
    <property type="term" value="P:corpus callosum morphogenesis"/>
    <property type="evidence" value="ECO:0007669"/>
    <property type="project" value="Ensembl"/>
</dbReference>
<dbReference type="GO" id="GO:0021957">
    <property type="term" value="P:corticospinal tract morphogenesis"/>
    <property type="evidence" value="ECO:0007669"/>
    <property type="project" value="Ensembl"/>
</dbReference>
<dbReference type="GO" id="GO:0032259">
    <property type="term" value="P:methylation"/>
    <property type="evidence" value="ECO:0007669"/>
    <property type="project" value="UniProtKB-KW"/>
</dbReference>
<dbReference type="GO" id="GO:0014003">
    <property type="term" value="P:oligodendrocyte development"/>
    <property type="evidence" value="ECO:0000318"/>
    <property type="project" value="GO_Central"/>
</dbReference>
<dbReference type="GO" id="GO:0006355">
    <property type="term" value="P:regulation of DNA-templated transcription"/>
    <property type="evidence" value="ECO:0000318"/>
    <property type="project" value="GO_Central"/>
</dbReference>
<dbReference type="CDD" id="cd19192">
    <property type="entry name" value="PR-SET_PRDM8"/>
    <property type="match status" value="1"/>
</dbReference>
<dbReference type="FunFam" id="2.170.270.10:FF:000012">
    <property type="entry name" value="PR domain zinc finger protein 8"/>
    <property type="match status" value="1"/>
</dbReference>
<dbReference type="Gene3D" id="3.30.160.60">
    <property type="entry name" value="Classic Zinc Finger"/>
    <property type="match status" value="1"/>
</dbReference>
<dbReference type="Gene3D" id="2.170.270.10">
    <property type="entry name" value="SET domain"/>
    <property type="match status" value="1"/>
</dbReference>
<dbReference type="InterPro" id="IPR044402">
    <property type="entry name" value="PRDM8-like_PR/SET"/>
</dbReference>
<dbReference type="InterPro" id="IPR001214">
    <property type="entry name" value="SET_dom"/>
</dbReference>
<dbReference type="InterPro" id="IPR046341">
    <property type="entry name" value="SET_dom_sf"/>
</dbReference>
<dbReference type="InterPro" id="IPR052296">
    <property type="entry name" value="TR-Histone_Methyltrans"/>
</dbReference>
<dbReference type="InterPro" id="IPR036236">
    <property type="entry name" value="Znf_C2H2_sf"/>
</dbReference>
<dbReference type="InterPro" id="IPR013087">
    <property type="entry name" value="Znf_C2H2_type"/>
</dbReference>
<dbReference type="PANTHER" id="PTHR16516">
    <property type="entry name" value="AGAP007109-PA"/>
    <property type="match status" value="1"/>
</dbReference>
<dbReference type="PANTHER" id="PTHR16516:SF7">
    <property type="entry name" value="PR DOMAIN ZINC FINGER PROTEIN 8"/>
    <property type="match status" value="1"/>
</dbReference>
<dbReference type="Pfam" id="PF21549">
    <property type="entry name" value="PRDM2_PR"/>
    <property type="match status" value="1"/>
</dbReference>
<dbReference type="Pfam" id="PF13894">
    <property type="entry name" value="zf-C2H2_4"/>
    <property type="match status" value="1"/>
</dbReference>
<dbReference type="SMART" id="SM00355">
    <property type="entry name" value="ZnF_C2H2"/>
    <property type="match status" value="3"/>
</dbReference>
<dbReference type="SUPFAM" id="SSF57667">
    <property type="entry name" value="beta-beta-alpha zinc fingers"/>
    <property type="match status" value="1"/>
</dbReference>
<dbReference type="PROSITE" id="PS50280">
    <property type="entry name" value="SET"/>
    <property type="match status" value="1"/>
</dbReference>
<dbReference type="PROSITE" id="PS00028">
    <property type="entry name" value="ZINC_FINGER_C2H2_1"/>
    <property type="match status" value="2"/>
</dbReference>
<dbReference type="PROSITE" id="PS50157">
    <property type="entry name" value="ZINC_FINGER_C2H2_2"/>
    <property type="match status" value="2"/>
</dbReference>
<name>PRDM8_HUMAN</name>
<feature type="chain" id="PRO_0000047764" description="PR domain zinc finger protein 8">
    <location>
        <begin position="1"/>
        <end position="689"/>
    </location>
</feature>
<feature type="domain" description="SET" evidence="3">
    <location>
        <begin position="16"/>
        <end position="131"/>
    </location>
</feature>
<feature type="zinc finger region" description="C2H2-type 1" evidence="2">
    <location>
        <begin position="155"/>
        <end position="183"/>
    </location>
</feature>
<feature type="zinc finger region" description="C2H2-type 2" evidence="2">
    <location>
        <begin position="625"/>
        <end position="648"/>
    </location>
</feature>
<feature type="zinc finger region" description="C2H2-type 3" evidence="2">
    <location>
        <begin position="666"/>
        <end position="688"/>
    </location>
</feature>
<feature type="region of interest" description="Disordered" evidence="4">
    <location>
        <begin position="185"/>
        <end position="333"/>
    </location>
</feature>
<feature type="region of interest" description="Disordered" evidence="4">
    <location>
        <begin position="397"/>
        <end position="506"/>
    </location>
</feature>
<feature type="compositionally biased region" description="Gly residues" evidence="4">
    <location>
        <begin position="193"/>
        <end position="210"/>
    </location>
</feature>
<feature type="compositionally biased region" description="Low complexity" evidence="4">
    <location>
        <begin position="241"/>
        <end position="258"/>
    </location>
</feature>
<feature type="compositionally biased region" description="Low complexity" evidence="4">
    <location>
        <begin position="273"/>
        <end position="286"/>
    </location>
</feature>
<feature type="compositionally biased region" description="Gly residues" evidence="4">
    <location>
        <begin position="322"/>
        <end position="333"/>
    </location>
</feature>
<feature type="compositionally biased region" description="Low complexity" evidence="4">
    <location>
        <begin position="423"/>
        <end position="433"/>
    </location>
</feature>
<feature type="compositionally biased region" description="Gly residues" evidence="4">
    <location>
        <begin position="472"/>
        <end position="491"/>
    </location>
</feature>
<feature type="binding site" evidence="3">
    <location>
        <position position="130"/>
    </location>
    <ligand>
        <name>S-adenosyl-L-methionine</name>
        <dbReference type="ChEBI" id="CHEBI:59789"/>
    </ligand>
</feature>
<feature type="splice variant" id="VSP_035602" description="In isoform 2." evidence="6">
    <original>GRG</original>
    <variation>AAL</variation>
    <location>
        <begin position="332"/>
        <end position="334"/>
    </location>
</feature>
<feature type="splice variant" id="VSP_035603" description="In isoform 2." evidence="6">
    <location>
        <begin position="335"/>
        <end position="689"/>
    </location>
</feature>
<feature type="sequence variant" id="VAR_075044" description="In EPM10; does not affect interaction with EPM2A and NHLRC1; dbSNP:rs863225286." evidence="5">
    <original>F</original>
    <variation>L</variation>
    <location>
        <position position="261"/>
    </location>
</feature>
<feature type="sequence conflict" description="In Ref. 1; AAF87241." evidence="7" ref="1">
    <original>G</original>
    <variation>A</variation>
    <location>
        <position position="323"/>
    </location>
</feature>
<feature type="sequence conflict" description="In Ref. 4; AAH71584." evidence="7" ref="4">
    <original>Q</original>
    <variation>R</variation>
    <location>
        <position position="354"/>
    </location>
</feature>
<feature type="sequence conflict" description="In Ref. 4; AAH71584." evidence="7" ref="4">
    <original>L</original>
    <variation>M</variation>
    <location>
        <position position="640"/>
    </location>
</feature>
<evidence type="ECO:0000250" key="1">
    <source>
        <dbReference type="UniProtKB" id="Q8BZ97"/>
    </source>
</evidence>
<evidence type="ECO:0000255" key="2">
    <source>
        <dbReference type="PROSITE-ProRule" id="PRU00042"/>
    </source>
</evidence>
<evidence type="ECO:0000255" key="3">
    <source>
        <dbReference type="PROSITE-ProRule" id="PRU00190"/>
    </source>
</evidence>
<evidence type="ECO:0000256" key="4">
    <source>
        <dbReference type="SAM" id="MobiDB-lite"/>
    </source>
</evidence>
<evidence type="ECO:0000269" key="5">
    <source>
    </source>
</evidence>
<evidence type="ECO:0000303" key="6">
    <source ref="1"/>
</evidence>
<evidence type="ECO:0000305" key="7"/>
<comment type="function">
    <text evidence="1">Probable histone methyltransferase, preferentially acting on 'Lys-9' of histone H3 (By similarity). Involved in the control of steroidogenesis through transcriptional repression of steroidogenesis marker genes such as CYP17A1 and LHCGR (By similarity). Forms with BHLHE22 a transcriptional repressor complex controlling genes involved in neural development and neuronal differentiation (By similarity). In the retina, it is required for rod bipolar and type 2 OFF-cone bipolar cell survival (By similarity).</text>
</comment>
<comment type="subunit">
    <text evidence="1 5">Interacts with EPM2A and NHLRC1. This interaction sequesters EPM2A and NHLRC1 to the nucleus (PubMed:22961547). Interacts with BHLHE22 (By similarity).</text>
</comment>
<comment type="subcellular location">
    <subcellularLocation>
        <location evidence="5">Nucleus</location>
    </subcellularLocation>
</comment>
<comment type="alternative products">
    <event type="alternative splicing"/>
    <isoform>
        <id>Q9NQV8-1</id>
        <name>1</name>
        <sequence type="displayed"/>
    </isoform>
    <isoform>
        <id>Q9NQV8-2</id>
        <name>2</name>
        <sequence type="described" ref="VSP_035602 VSP_035603"/>
    </isoform>
</comment>
<comment type="tissue specificity">
    <text evidence="5">Expressed in brain, heart, skeletal muscle, testes, prostate.</text>
</comment>
<comment type="disease" evidence="5">
    <disease id="DI-04581">
        <name>Epilepsy, progressive myoclonic 10</name>
        <acronym>EPM10</acronym>
        <description>A form of progressive myoclonic epilepsy, a clinically and genetically heterogeneous group of disorders defined by the combination of action and reflex myoclonus, other types of epileptic seizures, and progressive neurodegeneration and neurocognitive impairment. EPM10 is an autosomal recessive form characterized by progressive dysarthria, myoclonus, ataxia, cognitive decline, psychosis, dementia and spasticity, with onset in childhood. There is variability between patients.</description>
        <dbReference type="MIM" id="616640"/>
    </disease>
    <text>The disease is caused by variants affecting the gene represented in this entry.</text>
</comment>
<comment type="similarity">
    <text evidence="3">Belongs to the class V-like SAM-binding methyltransferase superfamily.</text>
</comment>
<comment type="caution">
    <text evidence="5">In disagreement with experimental results in mouse, PubMed:22961547 reports lack of histone methyltransferase activity on core histones generally, and on histone H3 specifically.</text>
</comment>
<comment type="sequence caution" evidence="7">
    <conflict type="frameshift">
        <sequence resource="EMBL-CDS" id="AAF87241"/>
    </conflict>
</comment>
<protein>
    <recommendedName>
        <fullName>PR domain zinc finger protein 8</fullName>
        <ecNumber>2.1.1.-</ecNumber>
    </recommendedName>
    <alternativeName>
        <fullName>PR domain-containing protein 8</fullName>
    </alternativeName>
</protein>
<reference key="1">
    <citation type="submission" date="2000-06" db="EMBL/GenBank/DDBJ databases">
        <title>A family of novel PR-domain (PRDM) genes as candidate tumor suppressors.</title>
        <authorList>
            <person name="Yang X.-H."/>
            <person name="Huang S."/>
        </authorList>
    </citation>
    <scope>NUCLEOTIDE SEQUENCE [MRNA] (ISOFORM 2)</scope>
</reference>
<reference key="2">
    <citation type="journal article" date="2004" name="Nat. Genet.">
        <title>Complete sequencing and characterization of 21,243 full-length human cDNAs.</title>
        <authorList>
            <person name="Ota T."/>
            <person name="Suzuki Y."/>
            <person name="Nishikawa T."/>
            <person name="Otsuki T."/>
            <person name="Sugiyama T."/>
            <person name="Irie R."/>
            <person name="Wakamatsu A."/>
            <person name="Hayashi K."/>
            <person name="Sato H."/>
            <person name="Nagai K."/>
            <person name="Kimura K."/>
            <person name="Makita H."/>
            <person name="Sekine M."/>
            <person name="Obayashi M."/>
            <person name="Nishi T."/>
            <person name="Shibahara T."/>
            <person name="Tanaka T."/>
            <person name="Ishii S."/>
            <person name="Yamamoto J."/>
            <person name="Saito K."/>
            <person name="Kawai Y."/>
            <person name="Isono Y."/>
            <person name="Nakamura Y."/>
            <person name="Nagahari K."/>
            <person name="Murakami K."/>
            <person name="Yasuda T."/>
            <person name="Iwayanagi T."/>
            <person name="Wagatsuma M."/>
            <person name="Shiratori A."/>
            <person name="Sudo H."/>
            <person name="Hosoiri T."/>
            <person name="Kaku Y."/>
            <person name="Kodaira H."/>
            <person name="Kondo H."/>
            <person name="Sugawara M."/>
            <person name="Takahashi M."/>
            <person name="Kanda K."/>
            <person name="Yokoi T."/>
            <person name="Furuya T."/>
            <person name="Kikkawa E."/>
            <person name="Omura Y."/>
            <person name="Abe K."/>
            <person name="Kamihara K."/>
            <person name="Katsuta N."/>
            <person name="Sato K."/>
            <person name="Tanikawa M."/>
            <person name="Yamazaki M."/>
            <person name="Ninomiya K."/>
            <person name="Ishibashi T."/>
            <person name="Yamashita H."/>
            <person name="Murakawa K."/>
            <person name="Fujimori K."/>
            <person name="Tanai H."/>
            <person name="Kimata M."/>
            <person name="Watanabe M."/>
            <person name="Hiraoka S."/>
            <person name="Chiba Y."/>
            <person name="Ishida S."/>
            <person name="Ono Y."/>
            <person name="Takiguchi S."/>
            <person name="Watanabe S."/>
            <person name="Yosida M."/>
            <person name="Hotuta T."/>
            <person name="Kusano J."/>
            <person name="Kanehori K."/>
            <person name="Takahashi-Fujii A."/>
            <person name="Hara H."/>
            <person name="Tanase T.-O."/>
            <person name="Nomura Y."/>
            <person name="Togiya S."/>
            <person name="Komai F."/>
            <person name="Hara R."/>
            <person name="Takeuchi K."/>
            <person name="Arita M."/>
            <person name="Imose N."/>
            <person name="Musashino K."/>
            <person name="Yuuki H."/>
            <person name="Oshima A."/>
            <person name="Sasaki N."/>
            <person name="Aotsuka S."/>
            <person name="Yoshikawa Y."/>
            <person name="Matsunawa H."/>
            <person name="Ichihara T."/>
            <person name="Shiohata N."/>
            <person name="Sano S."/>
            <person name="Moriya S."/>
            <person name="Momiyama H."/>
            <person name="Satoh N."/>
            <person name="Takami S."/>
            <person name="Terashima Y."/>
            <person name="Suzuki O."/>
            <person name="Nakagawa S."/>
            <person name="Senoh A."/>
            <person name="Mizoguchi H."/>
            <person name="Goto Y."/>
            <person name="Shimizu F."/>
            <person name="Wakebe H."/>
            <person name="Hishigaki H."/>
            <person name="Watanabe T."/>
            <person name="Sugiyama A."/>
            <person name="Takemoto M."/>
            <person name="Kawakami B."/>
            <person name="Yamazaki M."/>
            <person name="Watanabe K."/>
            <person name="Kumagai A."/>
            <person name="Itakura S."/>
            <person name="Fukuzumi Y."/>
            <person name="Fujimori Y."/>
            <person name="Komiyama M."/>
            <person name="Tashiro H."/>
            <person name="Tanigami A."/>
            <person name="Fujiwara T."/>
            <person name="Ono T."/>
            <person name="Yamada K."/>
            <person name="Fujii Y."/>
            <person name="Ozaki K."/>
            <person name="Hirao M."/>
            <person name="Ohmori Y."/>
            <person name="Kawabata A."/>
            <person name="Hikiji T."/>
            <person name="Kobatake N."/>
            <person name="Inagaki H."/>
            <person name="Ikema Y."/>
            <person name="Okamoto S."/>
            <person name="Okitani R."/>
            <person name="Kawakami T."/>
            <person name="Noguchi S."/>
            <person name="Itoh T."/>
            <person name="Shigeta K."/>
            <person name="Senba T."/>
            <person name="Matsumura K."/>
            <person name="Nakajima Y."/>
            <person name="Mizuno T."/>
            <person name="Morinaga M."/>
            <person name="Sasaki M."/>
            <person name="Togashi T."/>
            <person name="Oyama M."/>
            <person name="Hata H."/>
            <person name="Watanabe M."/>
            <person name="Komatsu T."/>
            <person name="Mizushima-Sugano J."/>
            <person name="Satoh T."/>
            <person name="Shirai Y."/>
            <person name="Takahashi Y."/>
            <person name="Nakagawa K."/>
            <person name="Okumura K."/>
            <person name="Nagase T."/>
            <person name="Nomura N."/>
            <person name="Kikuchi H."/>
            <person name="Masuho Y."/>
            <person name="Yamashita R."/>
            <person name="Nakai K."/>
            <person name="Yada T."/>
            <person name="Nakamura Y."/>
            <person name="Ohara O."/>
            <person name="Isogai T."/>
            <person name="Sugano S."/>
        </authorList>
    </citation>
    <scope>NUCLEOTIDE SEQUENCE [LARGE SCALE MRNA] (ISOFORM 1)</scope>
    <source>
        <tissue>Synovium</tissue>
    </source>
</reference>
<reference key="3">
    <citation type="submission" date="2005-07" db="EMBL/GenBank/DDBJ databases">
        <authorList>
            <person name="Mural R.J."/>
            <person name="Istrail S."/>
            <person name="Sutton G.G."/>
            <person name="Florea L."/>
            <person name="Halpern A.L."/>
            <person name="Mobarry C.M."/>
            <person name="Lippert R."/>
            <person name="Walenz B."/>
            <person name="Shatkay H."/>
            <person name="Dew I."/>
            <person name="Miller J.R."/>
            <person name="Flanigan M.J."/>
            <person name="Edwards N.J."/>
            <person name="Bolanos R."/>
            <person name="Fasulo D."/>
            <person name="Halldorsson B.V."/>
            <person name="Hannenhalli S."/>
            <person name="Turner R."/>
            <person name="Yooseph S."/>
            <person name="Lu F."/>
            <person name="Nusskern D.R."/>
            <person name="Shue B.C."/>
            <person name="Zheng X.H."/>
            <person name="Zhong F."/>
            <person name="Delcher A.L."/>
            <person name="Huson D.H."/>
            <person name="Kravitz S.A."/>
            <person name="Mouchard L."/>
            <person name="Reinert K."/>
            <person name="Remington K.A."/>
            <person name="Clark A.G."/>
            <person name="Waterman M.S."/>
            <person name="Eichler E.E."/>
            <person name="Adams M.D."/>
            <person name="Hunkapiller M.W."/>
            <person name="Myers E.W."/>
            <person name="Venter J.C."/>
        </authorList>
    </citation>
    <scope>NUCLEOTIDE SEQUENCE [LARGE SCALE GENOMIC DNA]</scope>
</reference>
<reference key="4">
    <citation type="journal article" date="2004" name="Genome Res.">
        <title>The status, quality, and expansion of the NIH full-length cDNA project: the Mammalian Gene Collection (MGC).</title>
        <authorList>
            <consortium name="The MGC Project Team"/>
        </authorList>
    </citation>
    <scope>NUCLEOTIDE SEQUENCE [LARGE SCALE MRNA] (ISOFORM 1)</scope>
    <source>
        <tissue>Brain</tissue>
    </source>
</reference>
<reference key="5">
    <citation type="journal article" date="2012" name="Brain">
        <title>Early-onset Lafora body disease.</title>
        <authorList>
            <person name="Turnbull J."/>
            <person name="Girard J.M."/>
            <person name="Lohi H."/>
            <person name="Chan E.M."/>
            <person name="Wang P."/>
            <person name="Tiberia E."/>
            <person name="Omer S."/>
            <person name="Ahmed M."/>
            <person name="Bennett C."/>
            <person name="Chakrabarty A."/>
            <person name="Tyagi A."/>
            <person name="Liu Y."/>
            <person name="Pencea N."/>
            <person name="Zhao X."/>
            <person name="Scherer S.W."/>
            <person name="Ackerley C.A."/>
            <person name="Minassian B.A."/>
        </authorList>
    </citation>
    <scope>SUBCELLULAR LOCATION</scope>
    <scope>TISSUE SPECIFICITY</scope>
    <scope>INTERACTION WITH EPM2A AND NHLRC1</scope>
    <scope>LACK OF HISTONE METHYLTRANSFERASE ACTIVITY</scope>
    <scope>INVOLVEMENT IN EPM10</scope>
    <scope>VARIANT EPM10 LEU-261</scope>
    <scope>CHARACTERIZATION OF VARIANT EPM10 LEU-261</scope>
</reference>